<keyword id="KW-0029">Amino-acid transport</keyword>
<keyword id="KW-0067">ATP-binding</keyword>
<keyword id="KW-0997">Cell inner membrane</keyword>
<keyword id="KW-1003">Cell membrane</keyword>
<keyword id="KW-0472">Membrane</keyword>
<keyword id="KW-0547">Nucleotide-binding</keyword>
<keyword id="KW-1278">Translocase</keyword>
<keyword id="KW-0813">Transport</keyword>
<name>METN_RHOP5</name>
<sequence length="371" mass="39915">MNEIAMNAPWPPHAGATTALASLQPTTGIRIEGVRKVYAARKSSAEVVALDGINLHVPKGSIQGVIGRSGAGKSTLIRLVNGLDKPSEGKVFVNDVEITSLSEPELRQARRSIGMVFQHFNLLSSRTAFGNVALPLEIAGTPKTEIEKRVLPLLDMVGLADKRDRYPAELSGGQKQRVGIARALATEPSVLLSDEATSALDPETTDQILDLLKQINRDLHLTILFITHEMAVVKALADRVAVIEGGRIVEEGSTFDVFATPRHEVTRRFVSSVTGSGAPDWLLAQPHEPPGGKAVLRITFKGSDANQPLLSHIARTLDIDINILSGQVEMIADHPFGTLIVSLTPSPDILRQVIAKLSTNNNLVEQLGYVA</sequence>
<gene>
    <name evidence="1" type="primary">metN</name>
    <name type="ordered locus">RPE_3184</name>
</gene>
<reference key="1">
    <citation type="submission" date="2006-09" db="EMBL/GenBank/DDBJ databases">
        <title>Complete sequence of Rhodopseudomonas palustris BisA53.</title>
        <authorList>
            <consortium name="US DOE Joint Genome Institute"/>
            <person name="Copeland A."/>
            <person name="Lucas S."/>
            <person name="Lapidus A."/>
            <person name="Barry K."/>
            <person name="Detter J.C."/>
            <person name="Glavina del Rio T."/>
            <person name="Hammon N."/>
            <person name="Israni S."/>
            <person name="Dalin E."/>
            <person name="Tice H."/>
            <person name="Pitluck S."/>
            <person name="Chain P."/>
            <person name="Malfatti S."/>
            <person name="Shin M."/>
            <person name="Vergez L."/>
            <person name="Schmutz J."/>
            <person name="Larimer F."/>
            <person name="Land M."/>
            <person name="Hauser L."/>
            <person name="Pelletier D.A."/>
            <person name="Kyrpides N."/>
            <person name="Kim E."/>
            <person name="Harwood C.S."/>
            <person name="Oda Y."/>
            <person name="Richardson P."/>
        </authorList>
    </citation>
    <scope>NUCLEOTIDE SEQUENCE [LARGE SCALE GENOMIC DNA]</scope>
    <source>
        <strain>BisA53</strain>
    </source>
</reference>
<comment type="function">
    <text evidence="1">Part of the ABC transporter complex MetNIQ involved in methionine import. Responsible for energy coupling to the transport system.</text>
</comment>
<comment type="catalytic activity">
    <reaction evidence="1">
        <text>L-methionine(out) + ATP + H2O = L-methionine(in) + ADP + phosphate + H(+)</text>
        <dbReference type="Rhea" id="RHEA:29779"/>
        <dbReference type="ChEBI" id="CHEBI:15377"/>
        <dbReference type="ChEBI" id="CHEBI:15378"/>
        <dbReference type="ChEBI" id="CHEBI:30616"/>
        <dbReference type="ChEBI" id="CHEBI:43474"/>
        <dbReference type="ChEBI" id="CHEBI:57844"/>
        <dbReference type="ChEBI" id="CHEBI:456216"/>
        <dbReference type="EC" id="7.4.2.11"/>
    </reaction>
</comment>
<comment type="catalytic activity">
    <reaction evidence="1">
        <text>D-methionine(out) + ATP + H2O = D-methionine(in) + ADP + phosphate + H(+)</text>
        <dbReference type="Rhea" id="RHEA:29767"/>
        <dbReference type="ChEBI" id="CHEBI:15377"/>
        <dbReference type="ChEBI" id="CHEBI:15378"/>
        <dbReference type="ChEBI" id="CHEBI:30616"/>
        <dbReference type="ChEBI" id="CHEBI:43474"/>
        <dbReference type="ChEBI" id="CHEBI:57932"/>
        <dbReference type="ChEBI" id="CHEBI:456216"/>
        <dbReference type="EC" id="7.4.2.11"/>
    </reaction>
</comment>
<comment type="subunit">
    <text evidence="1">The complex is composed of two ATP-binding proteins (MetN), two transmembrane proteins (MetI) and a solute-binding protein (MetQ).</text>
</comment>
<comment type="subcellular location">
    <subcellularLocation>
        <location evidence="1">Cell inner membrane</location>
        <topology evidence="1">Peripheral membrane protein</topology>
    </subcellularLocation>
</comment>
<comment type="similarity">
    <text evidence="1">Belongs to the ABC transporter superfamily. Methionine importer (TC 3.A.1.24) family.</text>
</comment>
<protein>
    <recommendedName>
        <fullName evidence="1">Methionine import ATP-binding protein MetN</fullName>
        <ecNumber evidence="1">7.4.2.11</ecNumber>
    </recommendedName>
</protein>
<organism>
    <name type="scientific">Rhodopseudomonas palustris (strain BisA53)</name>
    <dbReference type="NCBI Taxonomy" id="316055"/>
    <lineage>
        <taxon>Bacteria</taxon>
        <taxon>Pseudomonadati</taxon>
        <taxon>Pseudomonadota</taxon>
        <taxon>Alphaproteobacteria</taxon>
        <taxon>Hyphomicrobiales</taxon>
        <taxon>Nitrobacteraceae</taxon>
        <taxon>Rhodopseudomonas</taxon>
    </lineage>
</organism>
<evidence type="ECO:0000255" key="1">
    <source>
        <dbReference type="HAMAP-Rule" id="MF_01719"/>
    </source>
</evidence>
<proteinExistence type="inferred from homology"/>
<accession>Q07LR5</accession>
<dbReference type="EC" id="7.4.2.11" evidence="1"/>
<dbReference type="EMBL" id="CP000463">
    <property type="protein sequence ID" value="ABJ07119.1"/>
    <property type="molecule type" value="Genomic_DNA"/>
</dbReference>
<dbReference type="SMR" id="Q07LR5"/>
<dbReference type="STRING" id="316055.RPE_3184"/>
<dbReference type="KEGG" id="rpe:RPE_3184"/>
<dbReference type="eggNOG" id="COG1135">
    <property type="taxonomic scope" value="Bacteria"/>
</dbReference>
<dbReference type="HOGENOM" id="CLU_000604_1_3_5"/>
<dbReference type="GO" id="GO:0005886">
    <property type="term" value="C:plasma membrane"/>
    <property type="evidence" value="ECO:0007669"/>
    <property type="project" value="UniProtKB-SubCell"/>
</dbReference>
<dbReference type="GO" id="GO:0033232">
    <property type="term" value="F:ABC-type D-methionine transporter activity"/>
    <property type="evidence" value="ECO:0007669"/>
    <property type="project" value="UniProtKB-EC"/>
</dbReference>
<dbReference type="GO" id="GO:0005524">
    <property type="term" value="F:ATP binding"/>
    <property type="evidence" value="ECO:0007669"/>
    <property type="project" value="UniProtKB-KW"/>
</dbReference>
<dbReference type="GO" id="GO:0016887">
    <property type="term" value="F:ATP hydrolysis activity"/>
    <property type="evidence" value="ECO:0007669"/>
    <property type="project" value="InterPro"/>
</dbReference>
<dbReference type="CDD" id="cd03258">
    <property type="entry name" value="ABC_MetN_methionine_transporter"/>
    <property type="match status" value="1"/>
</dbReference>
<dbReference type="FunFam" id="3.40.50.300:FF:000056">
    <property type="entry name" value="Cell division ATP-binding protein FtsE"/>
    <property type="match status" value="1"/>
</dbReference>
<dbReference type="Gene3D" id="3.30.70.260">
    <property type="match status" value="1"/>
</dbReference>
<dbReference type="Gene3D" id="3.40.50.300">
    <property type="entry name" value="P-loop containing nucleotide triphosphate hydrolases"/>
    <property type="match status" value="1"/>
</dbReference>
<dbReference type="InterPro" id="IPR003593">
    <property type="entry name" value="AAA+_ATPase"/>
</dbReference>
<dbReference type="InterPro" id="IPR003439">
    <property type="entry name" value="ABC_transporter-like_ATP-bd"/>
</dbReference>
<dbReference type="InterPro" id="IPR017871">
    <property type="entry name" value="ABC_transporter-like_CS"/>
</dbReference>
<dbReference type="InterPro" id="IPR045865">
    <property type="entry name" value="ACT-like_dom_sf"/>
</dbReference>
<dbReference type="InterPro" id="IPR041701">
    <property type="entry name" value="MetN_ABC"/>
</dbReference>
<dbReference type="InterPro" id="IPR050086">
    <property type="entry name" value="MetN_ABC_transporter-like"/>
</dbReference>
<dbReference type="InterPro" id="IPR018449">
    <property type="entry name" value="NIL_domain"/>
</dbReference>
<dbReference type="InterPro" id="IPR027417">
    <property type="entry name" value="P-loop_NTPase"/>
</dbReference>
<dbReference type="PANTHER" id="PTHR43166">
    <property type="entry name" value="AMINO ACID IMPORT ATP-BINDING PROTEIN"/>
    <property type="match status" value="1"/>
</dbReference>
<dbReference type="PANTHER" id="PTHR43166:SF30">
    <property type="entry name" value="METHIONINE IMPORT ATP-BINDING PROTEIN METN"/>
    <property type="match status" value="1"/>
</dbReference>
<dbReference type="Pfam" id="PF00005">
    <property type="entry name" value="ABC_tran"/>
    <property type="match status" value="1"/>
</dbReference>
<dbReference type="Pfam" id="PF09383">
    <property type="entry name" value="NIL"/>
    <property type="match status" value="1"/>
</dbReference>
<dbReference type="SMART" id="SM00382">
    <property type="entry name" value="AAA"/>
    <property type="match status" value="1"/>
</dbReference>
<dbReference type="SMART" id="SM00930">
    <property type="entry name" value="NIL"/>
    <property type="match status" value="1"/>
</dbReference>
<dbReference type="SUPFAM" id="SSF55021">
    <property type="entry name" value="ACT-like"/>
    <property type="match status" value="1"/>
</dbReference>
<dbReference type="SUPFAM" id="SSF52540">
    <property type="entry name" value="P-loop containing nucleoside triphosphate hydrolases"/>
    <property type="match status" value="1"/>
</dbReference>
<dbReference type="PROSITE" id="PS00211">
    <property type="entry name" value="ABC_TRANSPORTER_1"/>
    <property type="match status" value="1"/>
</dbReference>
<dbReference type="PROSITE" id="PS50893">
    <property type="entry name" value="ABC_TRANSPORTER_2"/>
    <property type="match status" value="1"/>
</dbReference>
<dbReference type="PROSITE" id="PS51264">
    <property type="entry name" value="METN"/>
    <property type="match status" value="1"/>
</dbReference>
<feature type="chain" id="PRO_0000277694" description="Methionine import ATP-binding protein MetN">
    <location>
        <begin position="1"/>
        <end position="371"/>
    </location>
</feature>
<feature type="domain" description="ABC transporter" evidence="1">
    <location>
        <begin position="29"/>
        <end position="270"/>
    </location>
</feature>
<feature type="binding site" evidence="1">
    <location>
        <begin position="67"/>
        <end position="74"/>
    </location>
    <ligand>
        <name>ATP</name>
        <dbReference type="ChEBI" id="CHEBI:30616"/>
    </ligand>
</feature>